<gene>
    <name evidence="1" type="primary">crl</name>
    <name type="ordered locus">VC0395_A1865</name>
    <name type="ordered locus">VC395_2391</name>
</gene>
<comment type="function">
    <text evidence="1">Binds to the sigma-S subunit of RNA polymerase, activating expression of sigma-S-regulated genes. Stimulates RNA polymerase holoenzyme formation and may bind to several other sigma factors, such as sigma-70 and sigma-32.</text>
</comment>
<comment type="subcellular location">
    <subcellularLocation>
        <location evidence="1">Cytoplasm</location>
    </subcellularLocation>
</comment>
<comment type="similarity">
    <text evidence="1">Belongs to the Crl family.</text>
</comment>
<name>CRL_VIBC3</name>
<accession>A5F604</accession>
<accession>C3M3N2</accession>
<proteinExistence type="inferred from homology"/>
<keyword id="KW-0010">Activator</keyword>
<keyword id="KW-0963">Cytoplasm</keyword>
<keyword id="KW-0804">Transcription</keyword>
<keyword id="KW-0805">Transcription regulation</keyword>
<organism>
    <name type="scientific">Vibrio cholerae serotype O1 (strain ATCC 39541 / Classical Ogawa 395 / O395)</name>
    <dbReference type="NCBI Taxonomy" id="345073"/>
    <lineage>
        <taxon>Bacteria</taxon>
        <taxon>Pseudomonadati</taxon>
        <taxon>Pseudomonadota</taxon>
        <taxon>Gammaproteobacteria</taxon>
        <taxon>Vibrionales</taxon>
        <taxon>Vibrionaceae</taxon>
        <taxon>Vibrio</taxon>
    </lineage>
</organism>
<evidence type="ECO:0000255" key="1">
    <source>
        <dbReference type="HAMAP-Rule" id="MF_01178"/>
    </source>
</evidence>
<protein>
    <recommendedName>
        <fullName evidence="1">Sigma factor-binding protein Crl</fullName>
    </recommendedName>
</protein>
<sequence length="129" mass="14963">MSEMTKTPTHYRLLSTLKAMGPYLREGQCSERFYLFDCLASCVNDKKSPEKREFWGWWMELTQNEQEMSACYHIGRYTLAGDWVAEAIPESAQAEVNHTQAEFHKKLVKTLRERFEISVTVSTESAPFA</sequence>
<dbReference type="EMBL" id="CP000627">
    <property type="protein sequence ID" value="ABQ20225.1"/>
    <property type="molecule type" value="Genomic_DNA"/>
</dbReference>
<dbReference type="EMBL" id="CP001235">
    <property type="protein sequence ID" value="ACP10381.1"/>
    <property type="molecule type" value="Genomic_DNA"/>
</dbReference>
<dbReference type="RefSeq" id="WP_001293331.1">
    <property type="nucleotide sequence ID" value="NZ_JAACZH010000008.1"/>
</dbReference>
<dbReference type="SMR" id="A5F604"/>
<dbReference type="GeneID" id="69719101"/>
<dbReference type="KEGG" id="vco:VC0395_A1865"/>
<dbReference type="KEGG" id="vcr:VC395_2391"/>
<dbReference type="PATRIC" id="fig|345073.21.peg.2305"/>
<dbReference type="eggNOG" id="ENOG502ZQ8E">
    <property type="taxonomic scope" value="Bacteria"/>
</dbReference>
<dbReference type="HOGENOM" id="CLU_136773_1_0_6"/>
<dbReference type="OrthoDB" id="6428303at2"/>
<dbReference type="Proteomes" id="UP000000249">
    <property type="component" value="Chromosome 2"/>
</dbReference>
<dbReference type="GO" id="GO:0005737">
    <property type="term" value="C:cytoplasm"/>
    <property type="evidence" value="ECO:0007669"/>
    <property type="project" value="UniProtKB-SubCell"/>
</dbReference>
<dbReference type="GO" id="GO:0045893">
    <property type="term" value="P:positive regulation of DNA-templated transcription"/>
    <property type="evidence" value="ECO:0007669"/>
    <property type="project" value="UniProtKB-UniRule"/>
</dbReference>
<dbReference type="Gene3D" id="3.30.310.230">
    <property type="entry name" value="Sigma factor-binding protein Crl monomer"/>
    <property type="match status" value="1"/>
</dbReference>
<dbReference type="HAMAP" id="MF_01178">
    <property type="entry name" value="Crl"/>
    <property type="match status" value="1"/>
</dbReference>
<dbReference type="InterPro" id="IPR009986">
    <property type="entry name" value="Tscrpt_reg_Crl"/>
</dbReference>
<dbReference type="InterPro" id="IPR038208">
    <property type="entry name" value="Tscrpt_reg_Crl_sf"/>
</dbReference>
<dbReference type="NCBIfam" id="NF008217">
    <property type="entry name" value="PRK10984.1"/>
    <property type="match status" value="1"/>
</dbReference>
<dbReference type="Pfam" id="PF07417">
    <property type="entry name" value="Crl"/>
    <property type="match status" value="1"/>
</dbReference>
<reference key="1">
    <citation type="submission" date="2007-03" db="EMBL/GenBank/DDBJ databases">
        <authorList>
            <person name="Heidelberg J."/>
        </authorList>
    </citation>
    <scope>NUCLEOTIDE SEQUENCE [LARGE SCALE GENOMIC DNA]</scope>
    <source>
        <strain>ATCC 39541 / Classical Ogawa 395 / O395</strain>
    </source>
</reference>
<reference key="2">
    <citation type="journal article" date="2008" name="PLoS ONE">
        <title>A recalibrated molecular clock and independent origins for the cholera pandemic clones.</title>
        <authorList>
            <person name="Feng L."/>
            <person name="Reeves P.R."/>
            <person name="Lan R."/>
            <person name="Ren Y."/>
            <person name="Gao C."/>
            <person name="Zhou Z."/>
            <person name="Ren Y."/>
            <person name="Cheng J."/>
            <person name="Wang W."/>
            <person name="Wang J."/>
            <person name="Qian W."/>
            <person name="Li D."/>
            <person name="Wang L."/>
        </authorList>
    </citation>
    <scope>NUCLEOTIDE SEQUENCE [LARGE SCALE GENOMIC DNA]</scope>
    <source>
        <strain>ATCC 39541 / Classical Ogawa 395 / O395</strain>
    </source>
</reference>
<feature type="chain" id="PRO_1000073081" description="Sigma factor-binding protein Crl">
    <location>
        <begin position="1"/>
        <end position="129"/>
    </location>
</feature>
<feature type="region of interest" description="Essential for activity" evidence="1">
    <location>
        <begin position="99"/>
        <end position="119"/>
    </location>
</feature>